<keyword id="KW-0028">Amino-acid biosynthesis</keyword>
<keyword id="KW-0055">Arginine biosynthesis</keyword>
<keyword id="KW-0963">Cytoplasm</keyword>
<keyword id="KW-0521">NADP</keyword>
<keyword id="KW-0560">Oxidoreductase</keyword>
<keyword id="KW-1185">Reference proteome</keyword>
<name>ARGC_MICLC</name>
<dbReference type="EC" id="1.2.1.38" evidence="1"/>
<dbReference type="EMBL" id="CP001628">
    <property type="protein sequence ID" value="ACS30937.1"/>
    <property type="molecule type" value="Genomic_DNA"/>
</dbReference>
<dbReference type="RefSeq" id="WP_012750950.1">
    <property type="nucleotide sequence ID" value="NC_012803.1"/>
</dbReference>
<dbReference type="SMR" id="C5CAN3"/>
<dbReference type="STRING" id="465515.Mlut_14420"/>
<dbReference type="EnsemblBacteria" id="ACS30937">
    <property type="protein sequence ID" value="ACS30937"/>
    <property type="gene ID" value="Mlut_14420"/>
</dbReference>
<dbReference type="GeneID" id="93343318"/>
<dbReference type="KEGG" id="mlu:Mlut_14420"/>
<dbReference type="PATRIC" id="fig|465515.4.peg.1378"/>
<dbReference type="eggNOG" id="COG0002">
    <property type="taxonomic scope" value="Bacteria"/>
</dbReference>
<dbReference type="HOGENOM" id="CLU_006384_0_0_11"/>
<dbReference type="UniPathway" id="UPA00068">
    <property type="reaction ID" value="UER00108"/>
</dbReference>
<dbReference type="Proteomes" id="UP000000738">
    <property type="component" value="Chromosome"/>
</dbReference>
<dbReference type="GO" id="GO:0005737">
    <property type="term" value="C:cytoplasm"/>
    <property type="evidence" value="ECO:0007669"/>
    <property type="project" value="UniProtKB-SubCell"/>
</dbReference>
<dbReference type="GO" id="GO:0003942">
    <property type="term" value="F:N-acetyl-gamma-glutamyl-phosphate reductase activity"/>
    <property type="evidence" value="ECO:0007669"/>
    <property type="project" value="UniProtKB-UniRule"/>
</dbReference>
<dbReference type="GO" id="GO:0051287">
    <property type="term" value="F:NAD binding"/>
    <property type="evidence" value="ECO:0007669"/>
    <property type="project" value="InterPro"/>
</dbReference>
<dbReference type="GO" id="GO:0070401">
    <property type="term" value="F:NADP+ binding"/>
    <property type="evidence" value="ECO:0007669"/>
    <property type="project" value="InterPro"/>
</dbReference>
<dbReference type="GO" id="GO:0006526">
    <property type="term" value="P:L-arginine biosynthetic process"/>
    <property type="evidence" value="ECO:0007669"/>
    <property type="project" value="UniProtKB-UniRule"/>
</dbReference>
<dbReference type="CDD" id="cd24148">
    <property type="entry name" value="AGPR_1_actinobacAGPR_like"/>
    <property type="match status" value="1"/>
</dbReference>
<dbReference type="CDD" id="cd23934">
    <property type="entry name" value="AGPR_1_C"/>
    <property type="match status" value="1"/>
</dbReference>
<dbReference type="FunFam" id="3.30.360.10:FF:000014">
    <property type="entry name" value="N-acetyl-gamma-glutamyl-phosphate reductase"/>
    <property type="match status" value="1"/>
</dbReference>
<dbReference type="Gene3D" id="3.30.360.10">
    <property type="entry name" value="Dihydrodipicolinate Reductase, domain 2"/>
    <property type="match status" value="1"/>
</dbReference>
<dbReference type="Gene3D" id="3.40.50.720">
    <property type="entry name" value="NAD(P)-binding Rossmann-like Domain"/>
    <property type="match status" value="1"/>
</dbReference>
<dbReference type="HAMAP" id="MF_00150">
    <property type="entry name" value="ArgC_type1"/>
    <property type="match status" value="1"/>
</dbReference>
<dbReference type="InterPro" id="IPR023013">
    <property type="entry name" value="AGPR_AS"/>
</dbReference>
<dbReference type="InterPro" id="IPR000706">
    <property type="entry name" value="AGPR_type-1"/>
</dbReference>
<dbReference type="InterPro" id="IPR036291">
    <property type="entry name" value="NAD(P)-bd_dom_sf"/>
</dbReference>
<dbReference type="InterPro" id="IPR050085">
    <property type="entry name" value="NAGSA_dehydrogenase"/>
</dbReference>
<dbReference type="InterPro" id="IPR000534">
    <property type="entry name" value="Semialdehyde_DH_NAD-bd"/>
</dbReference>
<dbReference type="NCBIfam" id="TIGR01850">
    <property type="entry name" value="argC"/>
    <property type="match status" value="1"/>
</dbReference>
<dbReference type="PANTHER" id="PTHR32338:SF10">
    <property type="entry name" value="N-ACETYL-GAMMA-GLUTAMYL-PHOSPHATE REDUCTASE, CHLOROPLASTIC-RELATED"/>
    <property type="match status" value="1"/>
</dbReference>
<dbReference type="PANTHER" id="PTHR32338">
    <property type="entry name" value="N-ACETYL-GAMMA-GLUTAMYL-PHOSPHATE REDUCTASE, CHLOROPLASTIC-RELATED-RELATED"/>
    <property type="match status" value="1"/>
</dbReference>
<dbReference type="Pfam" id="PF01118">
    <property type="entry name" value="Semialdhyde_dh"/>
    <property type="match status" value="1"/>
</dbReference>
<dbReference type="Pfam" id="PF22698">
    <property type="entry name" value="Semialdhyde_dhC_1"/>
    <property type="match status" value="1"/>
</dbReference>
<dbReference type="SMART" id="SM00859">
    <property type="entry name" value="Semialdhyde_dh"/>
    <property type="match status" value="1"/>
</dbReference>
<dbReference type="SUPFAM" id="SSF55347">
    <property type="entry name" value="Glyceraldehyde-3-phosphate dehydrogenase-like, C-terminal domain"/>
    <property type="match status" value="1"/>
</dbReference>
<dbReference type="SUPFAM" id="SSF51735">
    <property type="entry name" value="NAD(P)-binding Rossmann-fold domains"/>
    <property type="match status" value="1"/>
</dbReference>
<dbReference type="PROSITE" id="PS01224">
    <property type="entry name" value="ARGC"/>
    <property type="match status" value="1"/>
</dbReference>
<protein>
    <recommendedName>
        <fullName evidence="1">N-acetyl-gamma-glutamyl-phosphate reductase</fullName>
        <shortName evidence="1">AGPR</shortName>
        <ecNumber evidence="1">1.2.1.38</ecNumber>
    </recommendedName>
    <alternativeName>
        <fullName evidence="1">N-acetyl-glutamate semialdehyde dehydrogenase</fullName>
        <shortName evidence="1">NAGSA dehydrogenase</shortName>
    </alternativeName>
</protein>
<accession>C5CAN3</accession>
<gene>
    <name evidence="1" type="primary">argC</name>
    <name type="ordered locus">Mlut_14420</name>
</gene>
<evidence type="ECO:0000255" key="1">
    <source>
        <dbReference type="HAMAP-Rule" id="MF_00150"/>
    </source>
</evidence>
<organism>
    <name type="scientific">Micrococcus luteus (strain ATCC 4698 / DSM 20030 / JCM 1464 / CCM 169 / CCUG 5858 / IAM 1056 / NBRC 3333 / NCIMB 9278 / NCTC 2665 / VKM Ac-2230)</name>
    <name type="common">Micrococcus lysodeikticus</name>
    <dbReference type="NCBI Taxonomy" id="465515"/>
    <lineage>
        <taxon>Bacteria</taxon>
        <taxon>Bacillati</taxon>
        <taxon>Actinomycetota</taxon>
        <taxon>Actinomycetes</taxon>
        <taxon>Micrococcales</taxon>
        <taxon>Micrococcaceae</taxon>
        <taxon>Micrococcus</taxon>
    </lineage>
</organism>
<comment type="function">
    <text evidence="1">Catalyzes the NADPH-dependent reduction of N-acetyl-5-glutamyl phosphate to yield N-acetyl-L-glutamate 5-semialdehyde.</text>
</comment>
<comment type="catalytic activity">
    <reaction evidence="1">
        <text>N-acetyl-L-glutamate 5-semialdehyde + phosphate + NADP(+) = N-acetyl-L-glutamyl 5-phosphate + NADPH + H(+)</text>
        <dbReference type="Rhea" id="RHEA:21588"/>
        <dbReference type="ChEBI" id="CHEBI:15378"/>
        <dbReference type="ChEBI" id="CHEBI:29123"/>
        <dbReference type="ChEBI" id="CHEBI:43474"/>
        <dbReference type="ChEBI" id="CHEBI:57783"/>
        <dbReference type="ChEBI" id="CHEBI:57936"/>
        <dbReference type="ChEBI" id="CHEBI:58349"/>
        <dbReference type="EC" id="1.2.1.38"/>
    </reaction>
</comment>
<comment type="pathway">
    <text evidence="1">Amino-acid biosynthesis; L-arginine biosynthesis; N(2)-acetyl-L-ornithine from L-glutamate: step 3/4.</text>
</comment>
<comment type="subcellular location">
    <subcellularLocation>
        <location evidence="1">Cytoplasm</location>
    </subcellularLocation>
</comment>
<comment type="similarity">
    <text evidence="1">Belongs to the NAGSA dehydrogenase family. Type 1 subfamily.</text>
</comment>
<sequence length="346" mass="35328">MTHTVAVSGASGYAGGEALRLLAGHPFVTVGAITAHSNAGERLGALQPHLHALVDRVLAETTADVLADHDVVILALPHGASGALAAEIAERSPDTLVIDAGADHRLESAADWEAFYGTAHAGTWPYGLPELPGQRERLAGTRRIAVPGCYPTTSILALAPGFAAGLLEPRDVVIVAASGTSGAGKALKPHLLGAEVMGGMSPYGVGGGHRHTPEIEQGLAQAAGEPVRISFTPTLAPMSRGILATATARLRPGVAAADVRAAWASAYGREPFVHLLPEGQWPTTKAVLGSNHVQLQLAVDERAGRVIVCAALDNLTKGTAGGAVQSMNIALGLPEQAGLEQQGVAP</sequence>
<feature type="chain" id="PRO_1000203408" description="N-acetyl-gamma-glutamyl-phosphate reductase">
    <location>
        <begin position="1"/>
        <end position="346"/>
    </location>
</feature>
<feature type="active site" evidence="1">
    <location>
        <position position="149"/>
    </location>
</feature>
<proteinExistence type="inferred from homology"/>
<reference key="1">
    <citation type="journal article" date="2010" name="J. Bacteriol.">
        <title>Genome sequence of the Fleming strain of Micrococcus luteus, a simple free-living actinobacterium.</title>
        <authorList>
            <person name="Young M."/>
            <person name="Artsatbanov V."/>
            <person name="Beller H.R."/>
            <person name="Chandra G."/>
            <person name="Chater K.F."/>
            <person name="Dover L.G."/>
            <person name="Goh E.B."/>
            <person name="Kahan T."/>
            <person name="Kaprelyants A.S."/>
            <person name="Kyrpides N."/>
            <person name="Lapidus A."/>
            <person name="Lowry S.R."/>
            <person name="Lykidis A."/>
            <person name="Mahillon J."/>
            <person name="Markowitz V."/>
            <person name="Mavromatis K."/>
            <person name="Mukamolova G.V."/>
            <person name="Oren A."/>
            <person name="Rokem J.S."/>
            <person name="Smith M.C."/>
            <person name="Young D.I."/>
            <person name="Greenblatt C.L."/>
        </authorList>
    </citation>
    <scope>NUCLEOTIDE SEQUENCE [LARGE SCALE GENOMIC DNA]</scope>
    <source>
        <strain>ATCC 4698 / DSM 20030 / JCM 1464 / CCM 169 / CCUG 5858 / IAM 1056 / NBRC 3333 / NCIMB 9278 / NCTC 2665 / VKM Ac-2230</strain>
    </source>
</reference>